<accession>B8GUB6</accession>
<comment type="function">
    <text evidence="1">Involved in the biosynthesis of branched-chain amino acids (BCAA). Catalyzes an alkyl-migration followed by a ketol-acid reduction of (S)-2-acetolactate (S2AL) to yield (R)-2,3-dihydroxy-isovalerate. In the isomerase reaction, S2AL is rearranged via a Mg-dependent methyl migration to produce 3-hydroxy-3-methyl-2-ketobutyrate (HMKB). In the reductase reaction, this 2-ketoacid undergoes a metal-dependent reduction by NADPH to yield (R)-2,3-dihydroxy-isovalerate.</text>
</comment>
<comment type="catalytic activity">
    <reaction evidence="1">
        <text>(2R)-2,3-dihydroxy-3-methylbutanoate + NADP(+) = (2S)-2-acetolactate + NADPH + H(+)</text>
        <dbReference type="Rhea" id="RHEA:22068"/>
        <dbReference type="ChEBI" id="CHEBI:15378"/>
        <dbReference type="ChEBI" id="CHEBI:49072"/>
        <dbReference type="ChEBI" id="CHEBI:57783"/>
        <dbReference type="ChEBI" id="CHEBI:58349"/>
        <dbReference type="ChEBI" id="CHEBI:58476"/>
        <dbReference type="EC" id="1.1.1.86"/>
    </reaction>
</comment>
<comment type="catalytic activity">
    <reaction evidence="1">
        <text>(2R,3R)-2,3-dihydroxy-3-methylpentanoate + NADP(+) = (S)-2-ethyl-2-hydroxy-3-oxobutanoate + NADPH + H(+)</text>
        <dbReference type="Rhea" id="RHEA:13493"/>
        <dbReference type="ChEBI" id="CHEBI:15378"/>
        <dbReference type="ChEBI" id="CHEBI:49256"/>
        <dbReference type="ChEBI" id="CHEBI:49258"/>
        <dbReference type="ChEBI" id="CHEBI:57783"/>
        <dbReference type="ChEBI" id="CHEBI:58349"/>
        <dbReference type="EC" id="1.1.1.86"/>
    </reaction>
</comment>
<comment type="cofactor">
    <cofactor evidence="1">
        <name>Mg(2+)</name>
        <dbReference type="ChEBI" id="CHEBI:18420"/>
    </cofactor>
    <text evidence="1">Binds 2 magnesium ions per subunit.</text>
</comment>
<comment type="pathway">
    <text evidence="1">Amino-acid biosynthesis; L-isoleucine biosynthesis; L-isoleucine from 2-oxobutanoate: step 2/4.</text>
</comment>
<comment type="pathway">
    <text evidence="1">Amino-acid biosynthesis; L-valine biosynthesis; L-valine from pyruvate: step 2/4.</text>
</comment>
<comment type="similarity">
    <text evidence="1">Belongs to the ketol-acid reductoisomerase family.</text>
</comment>
<protein>
    <recommendedName>
        <fullName evidence="1">Ketol-acid reductoisomerase (NADP(+))</fullName>
        <shortName evidence="1">KARI</shortName>
        <ecNumber evidence="1">1.1.1.86</ecNumber>
    </recommendedName>
    <alternativeName>
        <fullName evidence="1">Acetohydroxy-acid isomeroreductase</fullName>
        <shortName evidence="1">AHIR</shortName>
    </alternativeName>
    <alternativeName>
        <fullName evidence="1">Alpha-keto-beta-hydroxylacyl reductoisomerase</fullName>
    </alternativeName>
    <alternativeName>
        <fullName evidence="1">Ketol-acid reductoisomerase type 1</fullName>
    </alternativeName>
    <alternativeName>
        <fullName evidence="1">Ketol-acid reductoisomerase type I</fullName>
    </alternativeName>
</protein>
<sequence length="338" mass="36325">MQVYYDKDADLSIIQGMKVAIVGYGSQGHAHANNLKDSGVDVTVALRAGSASAKKAEGAGLKVQGIEEAVKAADLIMILAPDEHQAALYKNQVEPNLKQGAVLAFAHGFNVHFEQIVPRSDVDVIMIAPKGPGHLVRSTYTKGGGVPSLIAVYQDASGRARDIALSYASANGGGRAGVIETSFKDETETDLFGEQAVLCGGATALVQAGFETLVEAGYPPEMAYFECLHELKLIVDLMYEGGIADMRYSISNTAEYGDITRGPRVVTEQTKAEMKKILTEIQTGKFAREFILENQAGAATLKASRRIAREHPIEVVGAKLRDMMPWIKANKIVDKSKN</sequence>
<gene>
    <name evidence="1" type="primary">ilvC</name>
    <name type="ordered locus">Tgr7_2156</name>
</gene>
<feature type="chain" id="PRO_1000191013" description="Ketol-acid reductoisomerase (NADP(+))">
    <location>
        <begin position="1"/>
        <end position="338"/>
    </location>
</feature>
<feature type="domain" description="KARI N-terminal Rossmann" evidence="2">
    <location>
        <begin position="1"/>
        <end position="181"/>
    </location>
</feature>
<feature type="domain" description="KARI C-terminal knotted" evidence="3">
    <location>
        <begin position="182"/>
        <end position="327"/>
    </location>
</feature>
<feature type="active site" evidence="1">
    <location>
        <position position="107"/>
    </location>
</feature>
<feature type="binding site" evidence="1">
    <location>
        <begin position="24"/>
        <end position="27"/>
    </location>
    <ligand>
        <name>NADP(+)</name>
        <dbReference type="ChEBI" id="CHEBI:58349"/>
    </ligand>
</feature>
<feature type="binding site" evidence="1">
    <location>
        <position position="47"/>
    </location>
    <ligand>
        <name>NADP(+)</name>
        <dbReference type="ChEBI" id="CHEBI:58349"/>
    </ligand>
</feature>
<feature type="binding site" evidence="1">
    <location>
        <position position="50"/>
    </location>
    <ligand>
        <name>NADP(+)</name>
        <dbReference type="ChEBI" id="CHEBI:58349"/>
    </ligand>
</feature>
<feature type="binding site" evidence="1">
    <location>
        <position position="52"/>
    </location>
    <ligand>
        <name>NADP(+)</name>
        <dbReference type="ChEBI" id="CHEBI:58349"/>
    </ligand>
</feature>
<feature type="binding site" evidence="1">
    <location>
        <begin position="82"/>
        <end position="85"/>
    </location>
    <ligand>
        <name>NADP(+)</name>
        <dbReference type="ChEBI" id="CHEBI:58349"/>
    </ligand>
</feature>
<feature type="binding site" evidence="1">
    <location>
        <position position="133"/>
    </location>
    <ligand>
        <name>NADP(+)</name>
        <dbReference type="ChEBI" id="CHEBI:58349"/>
    </ligand>
</feature>
<feature type="binding site" evidence="1">
    <location>
        <position position="190"/>
    </location>
    <ligand>
        <name>Mg(2+)</name>
        <dbReference type="ChEBI" id="CHEBI:18420"/>
        <label>1</label>
    </ligand>
</feature>
<feature type="binding site" evidence="1">
    <location>
        <position position="190"/>
    </location>
    <ligand>
        <name>Mg(2+)</name>
        <dbReference type="ChEBI" id="CHEBI:18420"/>
        <label>2</label>
    </ligand>
</feature>
<feature type="binding site" evidence="1">
    <location>
        <position position="194"/>
    </location>
    <ligand>
        <name>Mg(2+)</name>
        <dbReference type="ChEBI" id="CHEBI:18420"/>
        <label>1</label>
    </ligand>
</feature>
<feature type="binding site" evidence="1">
    <location>
        <position position="226"/>
    </location>
    <ligand>
        <name>Mg(2+)</name>
        <dbReference type="ChEBI" id="CHEBI:18420"/>
        <label>2</label>
    </ligand>
</feature>
<feature type="binding site" evidence="1">
    <location>
        <position position="230"/>
    </location>
    <ligand>
        <name>Mg(2+)</name>
        <dbReference type="ChEBI" id="CHEBI:18420"/>
        <label>2</label>
    </ligand>
</feature>
<feature type="binding site" evidence="1">
    <location>
        <position position="251"/>
    </location>
    <ligand>
        <name>substrate</name>
    </ligand>
</feature>
<dbReference type="EC" id="1.1.1.86" evidence="1"/>
<dbReference type="EMBL" id="CP001339">
    <property type="protein sequence ID" value="ACL73236.1"/>
    <property type="molecule type" value="Genomic_DNA"/>
</dbReference>
<dbReference type="RefSeq" id="WP_012638714.1">
    <property type="nucleotide sequence ID" value="NC_011901.1"/>
</dbReference>
<dbReference type="SMR" id="B8GUB6"/>
<dbReference type="STRING" id="396588.Tgr7_2156"/>
<dbReference type="KEGG" id="tgr:Tgr7_2156"/>
<dbReference type="eggNOG" id="COG0059">
    <property type="taxonomic scope" value="Bacteria"/>
</dbReference>
<dbReference type="HOGENOM" id="CLU_033821_0_1_6"/>
<dbReference type="OrthoDB" id="9804088at2"/>
<dbReference type="UniPathway" id="UPA00047">
    <property type="reaction ID" value="UER00056"/>
</dbReference>
<dbReference type="UniPathway" id="UPA00049">
    <property type="reaction ID" value="UER00060"/>
</dbReference>
<dbReference type="Proteomes" id="UP000002383">
    <property type="component" value="Chromosome"/>
</dbReference>
<dbReference type="GO" id="GO:0005829">
    <property type="term" value="C:cytosol"/>
    <property type="evidence" value="ECO:0007669"/>
    <property type="project" value="TreeGrafter"/>
</dbReference>
<dbReference type="GO" id="GO:0004455">
    <property type="term" value="F:ketol-acid reductoisomerase activity"/>
    <property type="evidence" value="ECO:0007669"/>
    <property type="project" value="UniProtKB-UniRule"/>
</dbReference>
<dbReference type="GO" id="GO:0000287">
    <property type="term" value="F:magnesium ion binding"/>
    <property type="evidence" value="ECO:0007669"/>
    <property type="project" value="UniProtKB-UniRule"/>
</dbReference>
<dbReference type="GO" id="GO:0050661">
    <property type="term" value="F:NADP binding"/>
    <property type="evidence" value="ECO:0007669"/>
    <property type="project" value="InterPro"/>
</dbReference>
<dbReference type="GO" id="GO:0009097">
    <property type="term" value="P:isoleucine biosynthetic process"/>
    <property type="evidence" value="ECO:0007669"/>
    <property type="project" value="UniProtKB-UniRule"/>
</dbReference>
<dbReference type="GO" id="GO:0009099">
    <property type="term" value="P:L-valine biosynthetic process"/>
    <property type="evidence" value="ECO:0007669"/>
    <property type="project" value="UniProtKB-UniRule"/>
</dbReference>
<dbReference type="FunFam" id="3.40.50.720:FF:000023">
    <property type="entry name" value="Ketol-acid reductoisomerase (NADP(+))"/>
    <property type="match status" value="1"/>
</dbReference>
<dbReference type="Gene3D" id="6.10.240.10">
    <property type="match status" value="1"/>
</dbReference>
<dbReference type="Gene3D" id="3.40.50.720">
    <property type="entry name" value="NAD(P)-binding Rossmann-like Domain"/>
    <property type="match status" value="1"/>
</dbReference>
<dbReference type="HAMAP" id="MF_00435">
    <property type="entry name" value="IlvC"/>
    <property type="match status" value="1"/>
</dbReference>
<dbReference type="InterPro" id="IPR008927">
    <property type="entry name" value="6-PGluconate_DH-like_C_sf"/>
</dbReference>
<dbReference type="InterPro" id="IPR013023">
    <property type="entry name" value="KARI"/>
</dbReference>
<dbReference type="InterPro" id="IPR000506">
    <property type="entry name" value="KARI_C"/>
</dbReference>
<dbReference type="InterPro" id="IPR013116">
    <property type="entry name" value="KARI_N"/>
</dbReference>
<dbReference type="InterPro" id="IPR014359">
    <property type="entry name" value="KARI_prok"/>
</dbReference>
<dbReference type="InterPro" id="IPR036291">
    <property type="entry name" value="NAD(P)-bd_dom_sf"/>
</dbReference>
<dbReference type="NCBIfam" id="TIGR00465">
    <property type="entry name" value="ilvC"/>
    <property type="match status" value="1"/>
</dbReference>
<dbReference type="NCBIfam" id="NF004017">
    <property type="entry name" value="PRK05479.1"/>
    <property type="match status" value="1"/>
</dbReference>
<dbReference type="NCBIfam" id="NF009940">
    <property type="entry name" value="PRK13403.1"/>
    <property type="match status" value="1"/>
</dbReference>
<dbReference type="PANTHER" id="PTHR21371">
    <property type="entry name" value="KETOL-ACID REDUCTOISOMERASE, MITOCHONDRIAL"/>
    <property type="match status" value="1"/>
</dbReference>
<dbReference type="PANTHER" id="PTHR21371:SF1">
    <property type="entry name" value="KETOL-ACID REDUCTOISOMERASE, MITOCHONDRIAL"/>
    <property type="match status" value="1"/>
</dbReference>
<dbReference type="Pfam" id="PF01450">
    <property type="entry name" value="KARI_C"/>
    <property type="match status" value="1"/>
</dbReference>
<dbReference type="Pfam" id="PF07991">
    <property type="entry name" value="KARI_N"/>
    <property type="match status" value="1"/>
</dbReference>
<dbReference type="PIRSF" id="PIRSF000116">
    <property type="entry name" value="IlvC_gammaproteo"/>
    <property type="match status" value="1"/>
</dbReference>
<dbReference type="SUPFAM" id="SSF48179">
    <property type="entry name" value="6-phosphogluconate dehydrogenase C-terminal domain-like"/>
    <property type="match status" value="1"/>
</dbReference>
<dbReference type="SUPFAM" id="SSF51735">
    <property type="entry name" value="NAD(P)-binding Rossmann-fold domains"/>
    <property type="match status" value="1"/>
</dbReference>
<dbReference type="PROSITE" id="PS51851">
    <property type="entry name" value="KARI_C"/>
    <property type="match status" value="1"/>
</dbReference>
<dbReference type="PROSITE" id="PS51850">
    <property type="entry name" value="KARI_N"/>
    <property type="match status" value="1"/>
</dbReference>
<name>ILVC_THISH</name>
<reference key="1">
    <citation type="journal article" date="2011" name="Stand. Genomic Sci.">
        <title>Complete genome sequence of 'Thioalkalivibrio sulfidophilus' HL-EbGr7.</title>
        <authorList>
            <person name="Muyzer G."/>
            <person name="Sorokin D.Y."/>
            <person name="Mavromatis K."/>
            <person name="Lapidus A."/>
            <person name="Clum A."/>
            <person name="Ivanova N."/>
            <person name="Pati A."/>
            <person name="d'Haeseleer P."/>
            <person name="Woyke T."/>
            <person name="Kyrpides N.C."/>
        </authorList>
    </citation>
    <scope>NUCLEOTIDE SEQUENCE [LARGE SCALE GENOMIC DNA]</scope>
    <source>
        <strain>HL-EbGR7</strain>
    </source>
</reference>
<keyword id="KW-0028">Amino-acid biosynthesis</keyword>
<keyword id="KW-0100">Branched-chain amino acid biosynthesis</keyword>
<keyword id="KW-0460">Magnesium</keyword>
<keyword id="KW-0479">Metal-binding</keyword>
<keyword id="KW-0521">NADP</keyword>
<keyword id="KW-0560">Oxidoreductase</keyword>
<keyword id="KW-1185">Reference proteome</keyword>
<organism>
    <name type="scientific">Thioalkalivibrio sulfidiphilus (strain HL-EbGR7)</name>
    <dbReference type="NCBI Taxonomy" id="396588"/>
    <lineage>
        <taxon>Bacteria</taxon>
        <taxon>Pseudomonadati</taxon>
        <taxon>Pseudomonadota</taxon>
        <taxon>Gammaproteobacteria</taxon>
        <taxon>Chromatiales</taxon>
        <taxon>Ectothiorhodospiraceae</taxon>
        <taxon>Thioalkalivibrio</taxon>
    </lineage>
</organism>
<evidence type="ECO:0000255" key="1">
    <source>
        <dbReference type="HAMAP-Rule" id="MF_00435"/>
    </source>
</evidence>
<evidence type="ECO:0000255" key="2">
    <source>
        <dbReference type="PROSITE-ProRule" id="PRU01197"/>
    </source>
</evidence>
<evidence type="ECO:0000255" key="3">
    <source>
        <dbReference type="PROSITE-ProRule" id="PRU01198"/>
    </source>
</evidence>
<proteinExistence type="inferred from homology"/>